<accession>Q9DF56</accession>
<name>PA2A_OPHHA</name>
<keyword id="KW-0106">Calcium</keyword>
<keyword id="KW-1015">Disulfide bond</keyword>
<keyword id="KW-0378">Hydrolase</keyword>
<keyword id="KW-0442">Lipid degradation</keyword>
<keyword id="KW-0443">Lipid metabolism</keyword>
<keyword id="KW-0479">Metal-binding</keyword>
<keyword id="KW-0964">Secreted</keyword>
<keyword id="KW-0732">Signal</keyword>
<keyword id="KW-0800">Toxin</keyword>
<proteinExistence type="evidence at protein level"/>
<organism>
    <name type="scientific">Ophiophagus hannah</name>
    <name type="common">King cobra</name>
    <name type="synonym">Naja hannah</name>
    <dbReference type="NCBI Taxonomy" id="8665"/>
    <lineage>
        <taxon>Eukaryota</taxon>
        <taxon>Metazoa</taxon>
        <taxon>Chordata</taxon>
        <taxon>Craniata</taxon>
        <taxon>Vertebrata</taxon>
        <taxon>Euteleostomi</taxon>
        <taxon>Lepidosauria</taxon>
        <taxon>Squamata</taxon>
        <taxon>Bifurcata</taxon>
        <taxon>Unidentata</taxon>
        <taxon>Episquamata</taxon>
        <taxon>Toxicofera</taxon>
        <taxon>Serpentes</taxon>
        <taxon>Colubroidea</taxon>
        <taxon>Elapidae</taxon>
        <taxon>Elapinae</taxon>
        <taxon>Ophiophagus</taxon>
    </lineage>
</organism>
<protein>
    <recommendedName>
        <fullName>Acidic phospholipase A2</fullName>
        <shortName>svPLA2</shortName>
        <ecNumber>3.1.1.4</ecNumber>
    </recommendedName>
    <alternativeName>
        <fullName>Phosphatidylcholine 2-acylhydrolase</fullName>
    </alternativeName>
</protein>
<feature type="signal peptide" evidence="2">
    <location>
        <begin position="1"/>
        <end position="21"/>
    </location>
</feature>
<feature type="propeptide" id="PRO_0000022946" evidence="2">
    <location>
        <begin position="22"/>
        <end position="27"/>
    </location>
</feature>
<feature type="chain" id="PRO_0000022947" description="Acidic phospholipase A2">
    <location>
        <begin position="28"/>
        <end position="152"/>
    </location>
</feature>
<feature type="active site" evidence="1">
    <location>
        <position position="75"/>
    </location>
</feature>
<feature type="active site" evidence="1">
    <location>
        <position position="126"/>
    </location>
</feature>
<feature type="binding site" evidence="1">
    <location>
        <position position="55"/>
    </location>
    <ligand>
        <name>Ca(2+)</name>
        <dbReference type="ChEBI" id="CHEBI:29108"/>
    </ligand>
</feature>
<feature type="binding site" evidence="1">
    <location>
        <position position="57"/>
    </location>
    <ligand>
        <name>Ca(2+)</name>
        <dbReference type="ChEBI" id="CHEBI:29108"/>
    </ligand>
</feature>
<feature type="binding site" evidence="1">
    <location>
        <position position="59"/>
    </location>
    <ligand>
        <name>Ca(2+)</name>
        <dbReference type="ChEBI" id="CHEBI:29108"/>
    </ligand>
</feature>
<feature type="binding site" evidence="1">
    <location>
        <position position="76"/>
    </location>
    <ligand>
        <name>Ca(2+)</name>
        <dbReference type="ChEBI" id="CHEBI:29108"/>
    </ligand>
</feature>
<feature type="disulfide bond" evidence="1">
    <location>
        <begin position="38"/>
        <end position="104"/>
    </location>
</feature>
<feature type="disulfide bond" evidence="1">
    <location>
        <begin position="54"/>
        <end position="151"/>
    </location>
</feature>
<feature type="disulfide bond" evidence="1">
    <location>
        <begin position="56"/>
        <end position="72"/>
    </location>
</feature>
<feature type="disulfide bond" evidence="1">
    <location>
        <begin position="71"/>
        <end position="132"/>
    </location>
</feature>
<feature type="disulfide bond" evidence="1">
    <location>
        <begin position="78"/>
        <end position="125"/>
    </location>
</feature>
<feature type="disulfide bond" evidence="1">
    <location>
        <begin position="88"/>
        <end position="118"/>
    </location>
</feature>
<feature type="disulfide bond" evidence="1">
    <location>
        <begin position="111"/>
        <end position="123"/>
    </location>
</feature>
<comment type="function">
    <text evidence="1">PLA2 catalyzes the calcium-dependent hydrolysis of the 2-acyl groups in 3-sn-phosphoglycerides.</text>
</comment>
<comment type="catalytic activity">
    <reaction evidence="3 4">
        <text>a 1,2-diacyl-sn-glycero-3-phosphocholine + H2O = a 1-acyl-sn-glycero-3-phosphocholine + a fatty acid + H(+)</text>
        <dbReference type="Rhea" id="RHEA:15801"/>
        <dbReference type="ChEBI" id="CHEBI:15377"/>
        <dbReference type="ChEBI" id="CHEBI:15378"/>
        <dbReference type="ChEBI" id="CHEBI:28868"/>
        <dbReference type="ChEBI" id="CHEBI:57643"/>
        <dbReference type="ChEBI" id="CHEBI:58168"/>
        <dbReference type="EC" id="3.1.1.4"/>
    </reaction>
</comment>
<comment type="cofactor">
    <cofactor evidence="1">
        <name>Ca(2+)</name>
        <dbReference type="ChEBI" id="CHEBI:29108"/>
    </cofactor>
    <text evidence="1">Binds 1 Ca(2+) ion.</text>
</comment>
<comment type="subcellular location">
    <subcellularLocation>
        <location evidence="1">Secreted</location>
    </subcellularLocation>
</comment>
<comment type="tissue specificity">
    <text>Expressed by the venom gland.</text>
</comment>
<comment type="similarity">
    <text evidence="5">Belongs to the phospholipase A2 family. Group I subfamily. D49 sub-subfamily.</text>
</comment>
<evidence type="ECO:0000250" key="1"/>
<evidence type="ECO:0000255" key="2"/>
<evidence type="ECO:0000255" key="3">
    <source>
        <dbReference type="PROSITE-ProRule" id="PRU10035"/>
    </source>
</evidence>
<evidence type="ECO:0000255" key="4">
    <source>
        <dbReference type="PROSITE-ProRule" id="PRU10036"/>
    </source>
</evidence>
<evidence type="ECO:0000305" key="5"/>
<sequence length="152" mass="16641">MNPAHLLVLSAVCVSLLGASSIPPQPLNLLQFNYMIQCTIPGSRPFLDYMDYGCYCGTGVAGHPVDELDRCCQTHDLCYSKAEEQPKCSSLLNSPLMKKYSYTCSGGTLTCNDDNDECGAFICNCDRAARICFAGAPYNKENKELDIATRCQ</sequence>
<dbReference type="EC" id="3.1.1.4"/>
<dbReference type="EMBL" id="AF297034">
    <property type="protein sequence ID" value="AAG17443.1"/>
    <property type="molecule type" value="mRNA"/>
</dbReference>
<dbReference type="SMR" id="Q9DF56"/>
<dbReference type="TopDownProteomics" id="Q9DF56"/>
<dbReference type="GO" id="GO:0005576">
    <property type="term" value="C:extracellular region"/>
    <property type="evidence" value="ECO:0007669"/>
    <property type="project" value="UniProtKB-SubCell"/>
</dbReference>
<dbReference type="GO" id="GO:0005509">
    <property type="term" value="F:calcium ion binding"/>
    <property type="evidence" value="ECO:0007669"/>
    <property type="project" value="InterPro"/>
</dbReference>
<dbReference type="GO" id="GO:0047498">
    <property type="term" value="F:calcium-dependent phospholipase A2 activity"/>
    <property type="evidence" value="ECO:0007669"/>
    <property type="project" value="TreeGrafter"/>
</dbReference>
<dbReference type="GO" id="GO:0005543">
    <property type="term" value="F:phospholipid binding"/>
    <property type="evidence" value="ECO:0007669"/>
    <property type="project" value="TreeGrafter"/>
</dbReference>
<dbReference type="GO" id="GO:0005102">
    <property type="term" value="F:signaling receptor binding"/>
    <property type="evidence" value="ECO:0007669"/>
    <property type="project" value="TreeGrafter"/>
</dbReference>
<dbReference type="GO" id="GO:0090729">
    <property type="term" value="F:toxin activity"/>
    <property type="evidence" value="ECO:0007669"/>
    <property type="project" value="UniProtKB-KW"/>
</dbReference>
<dbReference type="GO" id="GO:0050482">
    <property type="term" value="P:arachidonate secretion"/>
    <property type="evidence" value="ECO:0007669"/>
    <property type="project" value="InterPro"/>
</dbReference>
<dbReference type="GO" id="GO:0006633">
    <property type="term" value="P:fatty acid biosynthetic process"/>
    <property type="evidence" value="ECO:0007669"/>
    <property type="project" value="TreeGrafter"/>
</dbReference>
<dbReference type="GO" id="GO:0016042">
    <property type="term" value="P:lipid catabolic process"/>
    <property type="evidence" value="ECO:0007669"/>
    <property type="project" value="UniProtKB-KW"/>
</dbReference>
<dbReference type="GO" id="GO:0006644">
    <property type="term" value="P:phospholipid metabolic process"/>
    <property type="evidence" value="ECO:0007669"/>
    <property type="project" value="InterPro"/>
</dbReference>
<dbReference type="GO" id="GO:0048146">
    <property type="term" value="P:positive regulation of fibroblast proliferation"/>
    <property type="evidence" value="ECO:0007669"/>
    <property type="project" value="TreeGrafter"/>
</dbReference>
<dbReference type="CDD" id="cd00125">
    <property type="entry name" value="PLA2c"/>
    <property type="match status" value="1"/>
</dbReference>
<dbReference type="FunFam" id="1.20.90.10:FF:000011">
    <property type="entry name" value="Phospholipase A(2)"/>
    <property type="match status" value="1"/>
</dbReference>
<dbReference type="Gene3D" id="1.20.90.10">
    <property type="entry name" value="Phospholipase A2 domain"/>
    <property type="match status" value="1"/>
</dbReference>
<dbReference type="InterPro" id="IPR001211">
    <property type="entry name" value="PLipase_A2"/>
</dbReference>
<dbReference type="InterPro" id="IPR033112">
    <property type="entry name" value="PLipase_A2_Asp_AS"/>
</dbReference>
<dbReference type="InterPro" id="IPR016090">
    <property type="entry name" value="PLipase_A2_dom"/>
</dbReference>
<dbReference type="InterPro" id="IPR036444">
    <property type="entry name" value="PLipase_A2_dom_sf"/>
</dbReference>
<dbReference type="InterPro" id="IPR033113">
    <property type="entry name" value="PLipase_A2_His_AS"/>
</dbReference>
<dbReference type="PANTHER" id="PTHR11716:SF94">
    <property type="entry name" value="PHOSPHOLIPASE A2"/>
    <property type="match status" value="1"/>
</dbReference>
<dbReference type="PANTHER" id="PTHR11716">
    <property type="entry name" value="PHOSPHOLIPASE A2 FAMILY MEMBER"/>
    <property type="match status" value="1"/>
</dbReference>
<dbReference type="Pfam" id="PF00068">
    <property type="entry name" value="Phospholip_A2_1"/>
    <property type="match status" value="1"/>
</dbReference>
<dbReference type="PRINTS" id="PR00389">
    <property type="entry name" value="PHPHLIPASEA2"/>
</dbReference>
<dbReference type="SMART" id="SM00085">
    <property type="entry name" value="PA2c"/>
    <property type="match status" value="1"/>
</dbReference>
<dbReference type="SUPFAM" id="SSF48619">
    <property type="entry name" value="Phospholipase A2, PLA2"/>
    <property type="match status" value="1"/>
</dbReference>
<dbReference type="PROSITE" id="PS00119">
    <property type="entry name" value="PA2_ASP"/>
    <property type="match status" value="1"/>
</dbReference>
<dbReference type="PROSITE" id="PS00118">
    <property type="entry name" value="PA2_HIS"/>
    <property type="match status" value="1"/>
</dbReference>
<reference key="1">
    <citation type="submission" date="2000-08" db="EMBL/GenBank/DDBJ databases">
        <title>Molecular cloning and sequence analysis of a phospholipase A2 from king cobra (Ophiophagus hannah).</title>
        <authorList>
            <person name="Lee W."/>
            <person name="Zhang Y."/>
        </authorList>
    </citation>
    <scope>NUCLEOTIDE SEQUENCE [MRNA]</scope>
    <source>
        <tissue>Venom gland</tissue>
    </source>
</reference>
<reference key="2">
    <citation type="journal article" date="2013" name="Proc. Natl. Acad. Sci. U.S.A.">
        <title>The king cobra genome reveals dynamic gene evolution and adaptation in the snake venom system.</title>
        <authorList>
            <person name="Vonk F.J."/>
            <person name="Casewell N.R."/>
            <person name="Henkel C.V."/>
            <person name="Heimberg A.M."/>
            <person name="Jansen H.J."/>
            <person name="McCleary R.J."/>
            <person name="Kerkkamp H.M."/>
            <person name="Vos R.A."/>
            <person name="Guerreiro I."/>
            <person name="Calvete J.J."/>
            <person name="Wuster W."/>
            <person name="Woods A.E."/>
            <person name="Logan J.M."/>
            <person name="Harrison R.A."/>
            <person name="Castoe T.A."/>
            <person name="de Koning A.P."/>
            <person name="Pollock D.D."/>
            <person name="Yandell M."/>
            <person name="Calderon D."/>
            <person name="Renjifo C."/>
            <person name="Currier R.B."/>
            <person name="Salgado D."/>
            <person name="Pla D."/>
            <person name="Sanz L."/>
            <person name="Hyder A.S."/>
            <person name="Ribeiro J.M."/>
            <person name="Arntzen J.W."/>
            <person name="van den Thillart G.E."/>
            <person name="Boetzer M."/>
            <person name="Pirovano W."/>
            <person name="Dirks R.P."/>
            <person name="Spaink H.P."/>
            <person name="Duboule D."/>
            <person name="McGlinn E."/>
            <person name="Kini R.M."/>
            <person name="Richardson M.K."/>
        </authorList>
    </citation>
    <scope>IDENTIFICATION BY MASS SPECTROMETRY</scope>
    <source>
        <tissue>Venom</tissue>
    </source>
</reference>